<organism>
    <name type="scientific">Staphylococcus aureus (strain Newman)</name>
    <dbReference type="NCBI Taxonomy" id="426430"/>
    <lineage>
        <taxon>Bacteria</taxon>
        <taxon>Bacillati</taxon>
        <taxon>Bacillota</taxon>
        <taxon>Bacilli</taxon>
        <taxon>Bacillales</taxon>
        <taxon>Staphylococcaceae</taxon>
        <taxon>Staphylococcus</taxon>
    </lineage>
</organism>
<sequence length="306" mass="34585">MEVTFFGTSAGLPTKERNTQAIALNLEPYSNSIWLFDVGEGTQHQILHHAIKLGKVTHIFITHMHGDHIFGLPGLLSSRSFQGGEQKPLTLVGPKGIKAYVEMSMNLSESHLNYPITYIEIDDHLTYHHDGFTVEAHLLNHGIPSYGYRVMAPETTGTINVEALKNIGLEPGPKYQEVKSHDTFEHNGQVYQSKDFRGESKQGPVVAIFGDTKPCSNERVISRDADVMVHEATYIDGEKHLANNYHHSHIEDVFALIKEANVKRTLITHLSNRYNTEDINEIYQTLIQNEDTPNFNFVKDFDSFKI</sequence>
<protein>
    <recommendedName>
        <fullName evidence="1">Ribonuclease Z</fullName>
        <shortName evidence="1">RNase Z</shortName>
        <ecNumber evidence="1">3.1.26.11</ecNumber>
    </recommendedName>
    <alternativeName>
        <fullName evidence="1">tRNA 3 endonuclease</fullName>
    </alternativeName>
    <alternativeName>
        <fullName evidence="1">tRNase Z</fullName>
    </alternativeName>
</protein>
<proteinExistence type="inferred from homology"/>
<evidence type="ECO:0000255" key="1">
    <source>
        <dbReference type="HAMAP-Rule" id="MF_01818"/>
    </source>
</evidence>
<reference key="1">
    <citation type="journal article" date="2008" name="J. Bacteriol.">
        <title>Genome sequence of Staphylococcus aureus strain Newman and comparative analysis of staphylococcal genomes: polymorphism and evolution of two major pathogenicity islands.</title>
        <authorList>
            <person name="Baba T."/>
            <person name="Bae T."/>
            <person name="Schneewind O."/>
            <person name="Takeuchi F."/>
            <person name="Hiramatsu K."/>
        </authorList>
    </citation>
    <scope>NUCLEOTIDE SEQUENCE [LARGE SCALE GENOMIC DNA]</scope>
    <source>
        <strain>Newman</strain>
    </source>
</reference>
<comment type="function">
    <text evidence="1">Zinc phosphodiesterase, which displays some tRNA 3'-processing endonuclease activity. Probably involved in tRNA maturation, by removing a 3'-trailer from precursor tRNA.</text>
</comment>
<comment type="catalytic activity">
    <reaction evidence="1">
        <text>Endonucleolytic cleavage of RNA, removing extra 3' nucleotides from tRNA precursor, generating 3' termini of tRNAs. A 3'-hydroxy group is left at the tRNA terminus and a 5'-phosphoryl group is left at the trailer molecule.</text>
        <dbReference type="EC" id="3.1.26.11"/>
    </reaction>
</comment>
<comment type="cofactor">
    <cofactor evidence="1">
        <name>Zn(2+)</name>
        <dbReference type="ChEBI" id="CHEBI:29105"/>
    </cofactor>
    <text evidence="1">Binds 2 Zn(2+) ions.</text>
</comment>
<comment type="subunit">
    <text evidence="1">Homodimer.</text>
</comment>
<comment type="similarity">
    <text evidence="1">Belongs to the RNase Z family.</text>
</comment>
<gene>
    <name evidence="1" type="primary">rnz</name>
    <name type="ordered locus">NWMN_1411</name>
</gene>
<feature type="chain" id="PRO_1000073685" description="Ribonuclease Z">
    <location>
        <begin position="1"/>
        <end position="306"/>
    </location>
</feature>
<feature type="active site" description="Proton acceptor" evidence="1">
    <location>
        <position position="67"/>
    </location>
</feature>
<feature type="binding site" evidence="1">
    <location>
        <position position="63"/>
    </location>
    <ligand>
        <name>Zn(2+)</name>
        <dbReference type="ChEBI" id="CHEBI:29105"/>
        <label>1</label>
        <note>catalytic</note>
    </ligand>
</feature>
<feature type="binding site" evidence="1">
    <location>
        <position position="65"/>
    </location>
    <ligand>
        <name>Zn(2+)</name>
        <dbReference type="ChEBI" id="CHEBI:29105"/>
        <label>1</label>
        <note>catalytic</note>
    </ligand>
</feature>
<feature type="binding site" evidence="1">
    <location>
        <position position="67"/>
    </location>
    <ligand>
        <name>Zn(2+)</name>
        <dbReference type="ChEBI" id="CHEBI:29105"/>
        <label>2</label>
        <note>catalytic</note>
    </ligand>
</feature>
<feature type="binding site" evidence="1">
    <location>
        <position position="68"/>
    </location>
    <ligand>
        <name>Zn(2+)</name>
        <dbReference type="ChEBI" id="CHEBI:29105"/>
        <label>2</label>
        <note>catalytic</note>
    </ligand>
</feature>
<feature type="binding site" evidence="1">
    <location>
        <position position="141"/>
    </location>
    <ligand>
        <name>Zn(2+)</name>
        <dbReference type="ChEBI" id="CHEBI:29105"/>
        <label>1</label>
        <note>catalytic</note>
    </ligand>
</feature>
<feature type="binding site" evidence="1">
    <location>
        <position position="211"/>
    </location>
    <ligand>
        <name>Zn(2+)</name>
        <dbReference type="ChEBI" id="CHEBI:29105"/>
        <label>1</label>
        <note>catalytic</note>
    </ligand>
</feature>
<feature type="binding site" evidence="1">
    <location>
        <position position="211"/>
    </location>
    <ligand>
        <name>Zn(2+)</name>
        <dbReference type="ChEBI" id="CHEBI:29105"/>
        <label>2</label>
        <note>catalytic</note>
    </ligand>
</feature>
<feature type="binding site" evidence="1">
    <location>
        <position position="269"/>
    </location>
    <ligand>
        <name>Zn(2+)</name>
        <dbReference type="ChEBI" id="CHEBI:29105"/>
        <label>2</label>
        <note>catalytic</note>
    </ligand>
</feature>
<name>RNZ_STAAE</name>
<dbReference type="EC" id="3.1.26.11" evidence="1"/>
<dbReference type="EMBL" id="AP009351">
    <property type="protein sequence ID" value="BAF67683.1"/>
    <property type="molecule type" value="Genomic_DNA"/>
</dbReference>
<dbReference type="RefSeq" id="WP_000454064.1">
    <property type="nucleotide sequence ID" value="NZ_JBBIAE010000001.1"/>
</dbReference>
<dbReference type="SMR" id="A6QH51"/>
<dbReference type="KEGG" id="sae:NWMN_1411"/>
<dbReference type="HOGENOM" id="CLU_031317_2_0_9"/>
<dbReference type="Proteomes" id="UP000006386">
    <property type="component" value="Chromosome"/>
</dbReference>
<dbReference type="GO" id="GO:0042781">
    <property type="term" value="F:3'-tRNA processing endoribonuclease activity"/>
    <property type="evidence" value="ECO:0007669"/>
    <property type="project" value="UniProtKB-UniRule"/>
</dbReference>
<dbReference type="GO" id="GO:0008270">
    <property type="term" value="F:zinc ion binding"/>
    <property type="evidence" value="ECO:0007669"/>
    <property type="project" value="UniProtKB-UniRule"/>
</dbReference>
<dbReference type="CDD" id="cd07717">
    <property type="entry name" value="RNaseZ_ZiPD-like_MBL-fold"/>
    <property type="match status" value="1"/>
</dbReference>
<dbReference type="FunFam" id="3.60.15.10:FF:000002">
    <property type="entry name" value="Ribonuclease Z"/>
    <property type="match status" value="1"/>
</dbReference>
<dbReference type="Gene3D" id="3.60.15.10">
    <property type="entry name" value="Ribonuclease Z/Hydroxyacylglutathione hydrolase-like"/>
    <property type="match status" value="1"/>
</dbReference>
<dbReference type="HAMAP" id="MF_01818">
    <property type="entry name" value="RNase_Z_BN"/>
    <property type="match status" value="1"/>
</dbReference>
<dbReference type="InterPro" id="IPR036866">
    <property type="entry name" value="RibonucZ/Hydroxyglut_hydro"/>
</dbReference>
<dbReference type="InterPro" id="IPR013471">
    <property type="entry name" value="RNase_Z/BN"/>
</dbReference>
<dbReference type="InterPro" id="IPR027794">
    <property type="entry name" value="tRNase_Z_dom"/>
</dbReference>
<dbReference type="NCBIfam" id="NF000801">
    <property type="entry name" value="PRK00055.1-3"/>
    <property type="match status" value="1"/>
</dbReference>
<dbReference type="NCBIfam" id="TIGR02651">
    <property type="entry name" value="RNase_Z"/>
    <property type="match status" value="1"/>
</dbReference>
<dbReference type="PANTHER" id="PTHR46018">
    <property type="entry name" value="ZINC PHOSPHODIESTERASE ELAC PROTEIN 1"/>
    <property type="match status" value="1"/>
</dbReference>
<dbReference type="PANTHER" id="PTHR46018:SF2">
    <property type="entry name" value="ZINC PHOSPHODIESTERASE ELAC PROTEIN 1"/>
    <property type="match status" value="1"/>
</dbReference>
<dbReference type="Pfam" id="PF13691">
    <property type="entry name" value="Lactamase_B_4"/>
    <property type="match status" value="1"/>
</dbReference>
<dbReference type="SUPFAM" id="SSF56281">
    <property type="entry name" value="Metallo-hydrolase/oxidoreductase"/>
    <property type="match status" value="1"/>
</dbReference>
<keyword id="KW-0255">Endonuclease</keyword>
<keyword id="KW-0378">Hydrolase</keyword>
<keyword id="KW-0479">Metal-binding</keyword>
<keyword id="KW-0540">Nuclease</keyword>
<keyword id="KW-0819">tRNA processing</keyword>
<keyword id="KW-0862">Zinc</keyword>
<accession>A6QH51</accession>